<accession>Q3ZBG8</accession>
<reference key="1">
    <citation type="submission" date="2005-08" db="EMBL/GenBank/DDBJ databases">
        <authorList>
            <consortium name="NIH - Mammalian Gene Collection (MGC) project"/>
        </authorList>
    </citation>
    <scope>NUCLEOTIDE SEQUENCE [LARGE SCALE MRNA]</scope>
    <source>
        <strain>Hereford</strain>
        <tissue>Uterus</tissue>
    </source>
</reference>
<keyword id="KW-0227">DNA damage</keyword>
<keyword id="KW-0234">DNA repair</keyword>
<keyword id="KW-0539">Nucleus</keyword>
<keyword id="KW-0597">Phosphoprotein</keyword>
<keyword id="KW-1185">Reference proteome</keyword>
<gene>
    <name evidence="1" type="primary">MRNIP</name>
</gene>
<dbReference type="EMBL" id="BC103300">
    <property type="protein sequence ID" value="AAI03301.1"/>
    <property type="molecule type" value="mRNA"/>
</dbReference>
<dbReference type="RefSeq" id="NP_001161415.1">
    <property type="nucleotide sequence ID" value="NM_001167943.1"/>
</dbReference>
<dbReference type="FunCoup" id="Q3ZBG8">
    <property type="interactions" value="449"/>
</dbReference>
<dbReference type="STRING" id="9913.ENSBTAP00000020727"/>
<dbReference type="PaxDb" id="9913-ENSBTAP00000020727"/>
<dbReference type="GeneID" id="614757"/>
<dbReference type="KEGG" id="bta:614757"/>
<dbReference type="CTD" id="51149"/>
<dbReference type="eggNOG" id="ENOG502S8YD">
    <property type="taxonomic scope" value="Eukaryota"/>
</dbReference>
<dbReference type="InParanoid" id="Q3ZBG8"/>
<dbReference type="OrthoDB" id="5960226at2759"/>
<dbReference type="Proteomes" id="UP000009136">
    <property type="component" value="Unplaced"/>
</dbReference>
<dbReference type="GO" id="GO:0005654">
    <property type="term" value="C:nucleoplasm"/>
    <property type="evidence" value="ECO:0000250"/>
    <property type="project" value="UniProtKB"/>
</dbReference>
<dbReference type="GO" id="GO:0005634">
    <property type="term" value="C:nucleus"/>
    <property type="evidence" value="ECO:0000250"/>
    <property type="project" value="UniProtKB"/>
</dbReference>
<dbReference type="GO" id="GO:0003682">
    <property type="term" value="F:chromatin binding"/>
    <property type="evidence" value="ECO:0000250"/>
    <property type="project" value="UniProtKB"/>
</dbReference>
<dbReference type="GO" id="GO:0006974">
    <property type="term" value="P:DNA damage response"/>
    <property type="evidence" value="ECO:0000250"/>
    <property type="project" value="UniProtKB"/>
</dbReference>
<dbReference type="GO" id="GO:0006281">
    <property type="term" value="P:DNA repair"/>
    <property type="evidence" value="ECO:0007669"/>
    <property type="project" value="UniProtKB-KW"/>
</dbReference>
<dbReference type="GO" id="GO:0007095">
    <property type="term" value="P:mitotic G2 DNA damage checkpoint signaling"/>
    <property type="evidence" value="ECO:0000250"/>
    <property type="project" value="UniProtKB"/>
</dbReference>
<dbReference type="GO" id="GO:1905168">
    <property type="term" value="P:positive regulation of double-strand break repair via homologous recombination"/>
    <property type="evidence" value="ECO:0000250"/>
    <property type="project" value="UniProtKB"/>
</dbReference>
<dbReference type="GO" id="GO:0045860">
    <property type="term" value="P:positive regulation of protein kinase activity"/>
    <property type="evidence" value="ECO:0000250"/>
    <property type="project" value="UniProtKB"/>
</dbReference>
<dbReference type="GO" id="GO:0071168">
    <property type="term" value="P:protein localization to chromatin"/>
    <property type="evidence" value="ECO:0000250"/>
    <property type="project" value="UniProtKB"/>
</dbReference>
<dbReference type="GO" id="GO:2001032">
    <property type="term" value="P:regulation of double-strand break repair via nonhomologous end joining"/>
    <property type="evidence" value="ECO:0000250"/>
    <property type="project" value="UniProtKB"/>
</dbReference>
<dbReference type="GO" id="GO:0010212">
    <property type="term" value="P:response to ionizing radiation"/>
    <property type="evidence" value="ECO:0000250"/>
    <property type="project" value="UniProtKB"/>
</dbReference>
<dbReference type="InterPro" id="IPR032739">
    <property type="entry name" value="MRNIP"/>
</dbReference>
<dbReference type="InterPro" id="IPR049472">
    <property type="entry name" value="MRNIP_N"/>
</dbReference>
<dbReference type="PANTHER" id="PTHR15863">
    <property type="entry name" value="MRN COMPLEX-INTERACTING PROTEIN"/>
    <property type="match status" value="1"/>
</dbReference>
<dbReference type="PANTHER" id="PTHR15863:SF2">
    <property type="entry name" value="MRN COMPLEX-INTERACTING PROTEIN"/>
    <property type="match status" value="1"/>
</dbReference>
<dbReference type="Pfam" id="PF15749">
    <property type="entry name" value="MRNIP"/>
    <property type="match status" value="1"/>
</dbReference>
<feature type="chain" id="PRO_0000326118" description="MRN complex-interacting protein">
    <location>
        <begin position="1"/>
        <end position="369"/>
    </location>
</feature>
<feature type="region of interest" description="Disordered" evidence="2">
    <location>
        <begin position="122"/>
        <end position="150"/>
    </location>
</feature>
<feature type="region of interest" description="Disordered" evidence="2">
    <location>
        <begin position="209"/>
        <end position="245"/>
    </location>
</feature>
<feature type="region of interest" description="Necessary for the association with the MRN complex" evidence="1">
    <location>
        <begin position="223"/>
        <end position="259"/>
    </location>
</feature>
<feature type="region of interest" description="Disordered" evidence="2">
    <location>
        <begin position="282"/>
        <end position="317"/>
    </location>
</feature>
<feature type="short sequence motif" description="Nuclear localization signal (NLS)" evidence="1">
    <location>
        <begin position="148"/>
        <end position="151"/>
    </location>
</feature>
<feature type="compositionally biased region" description="Basic and acidic residues" evidence="2">
    <location>
        <begin position="221"/>
        <end position="230"/>
    </location>
</feature>
<feature type="modified residue" description="Phosphoserine" evidence="1">
    <location>
        <position position="115"/>
    </location>
</feature>
<comment type="function">
    <text evidence="1">Plays a role in the cellular response to DNA damage and the maintenance of genome stability through its association with the MRN damage-sensing complex. Promotes chromatin loading and activity of the MRN complex to facilitate subsequent ATM-mediated DNA damage response signaling and DNA repair.</text>
</comment>
<comment type="subunit">
    <text evidence="1">Associates with the MRE11-RAD50-NBN (MRN) damage-sensing complex; this association is constitutive. Interacts with MRE11. Interacts with NBN. Interacts with RAD50.</text>
</comment>
<comment type="subcellular location">
    <subcellularLocation>
        <location evidence="1">Nucleus</location>
    </subcellularLocation>
    <subcellularLocation>
        <location evidence="1">Nucleus</location>
        <location evidence="1">Nucleoplasm</location>
    </subcellularLocation>
    <text evidence="1">Recruited to sites of DNA damage. Phosphorylation on Ser-115 induces its nuclear localization and promotes genome stability.</text>
</comment>
<comment type="PTM">
    <text evidence="1">Phosphorylated; phosphorylation is constitutive and occurs in the absence of any DNA-damaging stimulus. Phosphorylation on Ser-115 is necessary for its nuclear retention.</text>
</comment>
<comment type="similarity">
    <text evidence="3">Belongs to the MRNIP family.</text>
</comment>
<sequence>MAPPQQARVLRCCCCSLFQAHQVKKSLKWTCKACGKKQSFLQAYGEGSGADCRRHVQKLNLLQGQISEMSLRSLGESISANEEENVGPWQAARASPQETLQPSKNRWLKYLERDSKELGLKGGGVCFNSQPSSETEKPDPPFSTGLPRKRKWNQSTVQPLCGPHVQDSRNCEVTLKSLKARPLHPTWGARSSPDCSTWDLPCISEELPPSFTQDRAGLAGKGRESSREDLDTMELVPRGEPPCPAQQVRTMSKWEQCLGNSSHLDTEPLTPLQRGLRPIQAAQAEQGAPRAQTPREGGLCRLPGARQSPQTTHTPMPGPKWLCGRIPEQSQGTGPWAEGVPLVKGMQARSSLMRLCDLFKTGEDFDDDL</sequence>
<proteinExistence type="evidence at transcript level"/>
<organism>
    <name type="scientific">Bos taurus</name>
    <name type="common">Bovine</name>
    <dbReference type="NCBI Taxonomy" id="9913"/>
    <lineage>
        <taxon>Eukaryota</taxon>
        <taxon>Metazoa</taxon>
        <taxon>Chordata</taxon>
        <taxon>Craniata</taxon>
        <taxon>Vertebrata</taxon>
        <taxon>Euteleostomi</taxon>
        <taxon>Mammalia</taxon>
        <taxon>Eutheria</taxon>
        <taxon>Laurasiatheria</taxon>
        <taxon>Artiodactyla</taxon>
        <taxon>Ruminantia</taxon>
        <taxon>Pecora</taxon>
        <taxon>Bovidae</taxon>
        <taxon>Bovinae</taxon>
        <taxon>Bos</taxon>
    </lineage>
</organism>
<evidence type="ECO:0000250" key="1">
    <source>
        <dbReference type="UniProtKB" id="Q6NTE8"/>
    </source>
</evidence>
<evidence type="ECO:0000256" key="2">
    <source>
        <dbReference type="SAM" id="MobiDB-lite"/>
    </source>
</evidence>
<evidence type="ECO:0000305" key="3"/>
<name>MRNIP_BOVIN</name>
<protein>
    <recommendedName>
        <fullName evidence="1">MRN complex-interacting protein</fullName>
    </recommendedName>
    <alternativeName>
        <fullName evidence="1">MRN-interacting protein</fullName>
    </alternativeName>
</protein>